<organism>
    <name type="scientific">Rhodopseudomonas palustris (strain ATCC BAA-98 / CGA009)</name>
    <dbReference type="NCBI Taxonomy" id="258594"/>
    <lineage>
        <taxon>Bacteria</taxon>
        <taxon>Pseudomonadati</taxon>
        <taxon>Pseudomonadota</taxon>
        <taxon>Alphaproteobacteria</taxon>
        <taxon>Hyphomicrobiales</taxon>
        <taxon>Nitrobacteraceae</taxon>
        <taxon>Rhodopseudomonas</taxon>
    </lineage>
</organism>
<proteinExistence type="evidence at protein level"/>
<sequence length="418" mass="43828">MSKTVHVIGAGISGLAAAIRLARAGLTVHVHEAMQQAGGRCRSYFDAQTGLVIDNGNHLLLSGNHAACEYARTIGTEAGLVGPERAEFDFIDLPANARWRLKLGGGKLPLWLFDANSRVPDTSIGDYLGLMPLLWAPTTKLIGDTINCSGPLYDRLVAPLLLAALNVDPPEGSAGLAGAVVRETLLAGGKACRPLIARDGLSAVLVEPAVAQLAARGPGVQFGHELRALTPAGDRVGALQFGGEDVVTLGPDDAVVLAVPPRPAASLLPGLKTPQEYRAIVNAHFNYAPPPGMPALTGVIGGVVEWLFAFPNRLSVTISNGDRLVDAPREQLAAEIWGEICKIAGISANLPPWQIVRERRATFAATPAQNALRPGPVTQWRNLYLAGDWTDTGLPATIEGSVRSGNRAADLVLAAGRA</sequence>
<keyword id="KW-0274">FAD</keyword>
<keyword id="KW-0285">Flavoprotein</keyword>
<keyword id="KW-0560">Oxidoreductase</keyword>
<accession>Q6N3F3</accession>
<name>HPNE_RHOPA</name>
<reference key="1">
    <citation type="journal article" date="2004" name="Nat. Biotechnol.">
        <title>Complete genome sequence of the metabolically versatile photosynthetic bacterium Rhodopseudomonas palustris.</title>
        <authorList>
            <person name="Larimer F.W."/>
            <person name="Chain P."/>
            <person name="Hauser L."/>
            <person name="Lamerdin J.E."/>
            <person name="Malfatti S."/>
            <person name="Do L."/>
            <person name="Land M.L."/>
            <person name="Pelletier D.A."/>
            <person name="Beatty J.T."/>
            <person name="Lang A.S."/>
            <person name="Tabita F.R."/>
            <person name="Gibson J.L."/>
            <person name="Hanson T.E."/>
            <person name="Bobst C."/>
            <person name="Torres y Torres J.L."/>
            <person name="Peres C."/>
            <person name="Harrison F.H."/>
            <person name="Gibson J."/>
            <person name="Harwood C.S."/>
        </authorList>
    </citation>
    <scope>NUCLEOTIDE SEQUENCE [LARGE SCALE GENOMIC DNA]</scope>
    <source>
        <strain>ATCC BAA-98 / CGA009</strain>
    </source>
</reference>
<reference key="2">
    <citation type="journal article" date="2015" name="ACS Cent. Sci.">
        <title>Biosynthesis of squalene from farnesyl diphosphate in bacteria: three steps catalyzed by three enzymes.</title>
        <authorList>
            <person name="Pan J.J."/>
            <person name="Solbiati J.O."/>
            <person name="Ramamoorthy G."/>
            <person name="Hillerich B.S."/>
            <person name="Seidel R.D."/>
            <person name="Cronan J.E."/>
            <person name="Almo S.C."/>
            <person name="Poulter C.D."/>
        </authorList>
    </citation>
    <scope>FUNCTION</scope>
    <scope>CATALYTIC ACTIVITY</scope>
    <scope>PATHWAY</scope>
    <source>
        <strain>ATCC BAA-98 / CGA009</strain>
    </source>
</reference>
<evidence type="ECO:0000269" key="1">
    <source>
    </source>
</evidence>
<evidence type="ECO:0000303" key="2">
    <source>
    </source>
</evidence>
<evidence type="ECO:0000305" key="3"/>
<evidence type="ECO:0000312" key="4">
    <source>
        <dbReference type="EMBL" id="CAE29182.1"/>
    </source>
</evidence>
<dbReference type="EC" id="1.17.8.1" evidence="1"/>
<dbReference type="EMBL" id="BX572605">
    <property type="protein sequence ID" value="CAE29182.1"/>
    <property type="molecule type" value="Genomic_DNA"/>
</dbReference>
<dbReference type="RefSeq" id="WP_011159279.1">
    <property type="nucleotide sequence ID" value="NZ_CP116810.1"/>
</dbReference>
<dbReference type="SMR" id="Q6N3F3"/>
<dbReference type="STRING" id="258594.RPA3741"/>
<dbReference type="GeneID" id="66894847"/>
<dbReference type="eggNOG" id="COG1232">
    <property type="taxonomic scope" value="Bacteria"/>
</dbReference>
<dbReference type="HOGENOM" id="CLU_022687_2_1_5"/>
<dbReference type="PhylomeDB" id="Q6N3F3"/>
<dbReference type="BioCyc" id="MetaCyc:MONOMER-19572"/>
<dbReference type="UniPathway" id="UPA00337"/>
<dbReference type="GO" id="GO:0016491">
    <property type="term" value="F:oxidoreductase activity"/>
    <property type="evidence" value="ECO:0007669"/>
    <property type="project" value="UniProtKB-KW"/>
</dbReference>
<dbReference type="Gene3D" id="3.50.50.60">
    <property type="entry name" value="FAD/NAD(P)-binding domain"/>
    <property type="match status" value="1"/>
</dbReference>
<dbReference type="InterPro" id="IPR002937">
    <property type="entry name" value="Amino_oxidase"/>
</dbReference>
<dbReference type="InterPro" id="IPR036188">
    <property type="entry name" value="FAD/NAD-bd_sf"/>
</dbReference>
<dbReference type="InterPro" id="IPR017830">
    <property type="entry name" value="SQase_HpnE"/>
</dbReference>
<dbReference type="InterPro" id="IPR050464">
    <property type="entry name" value="Zeta_carotene_desat/Oxidored"/>
</dbReference>
<dbReference type="NCBIfam" id="TIGR03467">
    <property type="entry name" value="HpnE"/>
    <property type="match status" value="1"/>
</dbReference>
<dbReference type="PANTHER" id="PTHR42923:SF47">
    <property type="entry name" value="BLR3003 PROTEIN"/>
    <property type="match status" value="1"/>
</dbReference>
<dbReference type="PANTHER" id="PTHR42923">
    <property type="entry name" value="PROTOPORPHYRINOGEN OXIDASE"/>
    <property type="match status" value="1"/>
</dbReference>
<dbReference type="Pfam" id="PF01593">
    <property type="entry name" value="Amino_oxidase"/>
    <property type="match status" value="1"/>
</dbReference>
<dbReference type="SUPFAM" id="SSF51905">
    <property type="entry name" value="FAD/NAD(P)-binding domain"/>
    <property type="match status" value="1"/>
</dbReference>
<comment type="function">
    <text evidence="1">Involved in the biosynthesis of the hopanoid precursor squalene (SQ) from farnesyl diphosphate (FPP). Catalyzes the third (last) step, the reduction of hydroxysqualene (HSQ) to SQ.</text>
</comment>
<comment type="catalytic activity">
    <reaction evidence="1">
        <text>squalene + FAD + H2O + H(+) = hydroxysqualene + FADH2</text>
        <dbReference type="Rhea" id="RHEA:49088"/>
        <dbReference type="ChEBI" id="CHEBI:15377"/>
        <dbReference type="ChEBI" id="CHEBI:15378"/>
        <dbReference type="ChEBI" id="CHEBI:15440"/>
        <dbReference type="ChEBI" id="CHEBI:57692"/>
        <dbReference type="ChEBI" id="CHEBI:58307"/>
        <dbReference type="ChEBI" id="CHEBI:88123"/>
        <dbReference type="EC" id="1.17.8.1"/>
    </reaction>
</comment>
<comment type="pathway">
    <text evidence="1">Secondary metabolite biosynthesis; hopanoid biosynthesis.</text>
</comment>
<comment type="similarity">
    <text evidence="3">Belongs to the HpnE family.</text>
</comment>
<feature type="chain" id="PRO_0000441695" description="Hydroxysqualene dehydroxylase">
    <location>
        <begin position="1"/>
        <end position="418"/>
    </location>
</feature>
<gene>
    <name evidence="2" type="primary">hpnE</name>
    <name evidence="4" type="ordered locus">RPA3741</name>
</gene>
<protein>
    <recommendedName>
        <fullName evidence="2">Hydroxysqualene dehydroxylase</fullName>
        <shortName evidence="2">SQase</shortName>
        <ecNumber evidence="1">1.17.8.1</ecNumber>
    </recommendedName>
</protein>